<sequence>MKLFVQLVLFISLFIPYSTKAVLYVDIKKSNIGNIDLVVSKCACKTEVENELSESITKVIETNLSNCGLFNVKRDAKVESWKSDTVVTISLSEVSNRNLELSFRLSDSFTNRELLTQSVVFLAKDWRKISHLVSDLIHDRLIGEKGHFNTKITYIAEEKDSNYKSVRKIAVMNQDGSNIKYLTNGEKFVSTPRFSPNGKGIVYISYTNGKSYIILKNLKDNTESIISAFEGVISAPRFSPDGKSLFISHSLSGETNILSLDLSSKRTKKITKGSAISTSPSLSPDQKYMVFSSDISGSQQLYIIDFTKKSKKPKRISFGNGRYATPVWSPKGDLIAFTKIQSGKFYIGVMKPDGKEERLLSEGHKIESPAWLPNGREIIFTNAESPSNSKLYLVDLVKKNQKMVFTPTNASLPDWSYF</sequence>
<gene>
    <name evidence="1" type="primary">tolB</name>
    <name type="ordered locus">WP0225</name>
</gene>
<comment type="function">
    <text evidence="1">Part of the Tol-Pal system, which plays a role in outer membrane invagination during cell division and is important for maintaining outer membrane integrity.</text>
</comment>
<comment type="subunit">
    <text evidence="1">The Tol-Pal system is composed of five core proteins: the inner membrane proteins TolA, TolQ and TolR, the periplasmic protein TolB and the outer membrane protein Pal. They form a network linking the inner and outer membranes and the peptidoglycan layer.</text>
</comment>
<comment type="subcellular location">
    <subcellularLocation>
        <location evidence="1">Periplasm</location>
    </subcellularLocation>
</comment>
<comment type="similarity">
    <text evidence="1">Belongs to the TolB family.</text>
</comment>
<accession>B3CP06</accession>
<keyword id="KW-0131">Cell cycle</keyword>
<keyword id="KW-0132">Cell division</keyword>
<keyword id="KW-0574">Periplasm</keyword>
<keyword id="KW-0732">Signal</keyword>
<name>TOLB_WOLPP</name>
<organism>
    <name type="scientific">Wolbachia pipientis subsp. Culex pipiens (strain wPip)</name>
    <dbReference type="NCBI Taxonomy" id="570417"/>
    <lineage>
        <taxon>Bacteria</taxon>
        <taxon>Pseudomonadati</taxon>
        <taxon>Pseudomonadota</taxon>
        <taxon>Alphaproteobacteria</taxon>
        <taxon>Rickettsiales</taxon>
        <taxon>Anaplasmataceae</taxon>
        <taxon>Wolbachieae</taxon>
        <taxon>Wolbachia</taxon>
    </lineage>
</organism>
<feature type="signal peptide" evidence="1">
    <location>
        <begin position="1"/>
        <end position="21"/>
    </location>
</feature>
<feature type="chain" id="PRO_1000131539" description="Tol-Pal system protein TolB" evidence="1">
    <location>
        <begin position="22"/>
        <end position="418"/>
    </location>
</feature>
<protein>
    <recommendedName>
        <fullName evidence="1">Tol-Pal system protein TolB</fullName>
    </recommendedName>
</protein>
<dbReference type="EMBL" id="AM999887">
    <property type="protein sequence ID" value="CAQ54333.1"/>
    <property type="molecule type" value="Genomic_DNA"/>
</dbReference>
<dbReference type="RefSeq" id="WP_012481764.1">
    <property type="nucleotide sequence ID" value="NC_010981.1"/>
</dbReference>
<dbReference type="SMR" id="B3CP06"/>
<dbReference type="KEGG" id="wpi:WP0225"/>
<dbReference type="eggNOG" id="COG0823">
    <property type="taxonomic scope" value="Bacteria"/>
</dbReference>
<dbReference type="HOGENOM" id="CLU_047123_0_0_5"/>
<dbReference type="Proteomes" id="UP000008814">
    <property type="component" value="Chromosome"/>
</dbReference>
<dbReference type="GO" id="GO:0042597">
    <property type="term" value="C:periplasmic space"/>
    <property type="evidence" value="ECO:0007669"/>
    <property type="project" value="UniProtKB-SubCell"/>
</dbReference>
<dbReference type="GO" id="GO:0051301">
    <property type="term" value="P:cell division"/>
    <property type="evidence" value="ECO:0007669"/>
    <property type="project" value="UniProtKB-UniRule"/>
</dbReference>
<dbReference type="GO" id="GO:0017038">
    <property type="term" value="P:protein import"/>
    <property type="evidence" value="ECO:0007669"/>
    <property type="project" value="InterPro"/>
</dbReference>
<dbReference type="Gene3D" id="2.120.10.30">
    <property type="entry name" value="TolB, C-terminal domain"/>
    <property type="match status" value="1"/>
</dbReference>
<dbReference type="Gene3D" id="3.40.50.10070">
    <property type="entry name" value="TolB, N-terminal domain"/>
    <property type="match status" value="1"/>
</dbReference>
<dbReference type="HAMAP" id="MF_00671">
    <property type="entry name" value="TolB"/>
    <property type="match status" value="1"/>
</dbReference>
<dbReference type="InterPro" id="IPR011042">
    <property type="entry name" value="6-blade_b-propeller_TolB-like"/>
</dbReference>
<dbReference type="InterPro" id="IPR011659">
    <property type="entry name" value="PD40"/>
</dbReference>
<dbReference type="InterPro" id="IPR014167">
    <property type="entry name" value="Tol-Pal_TolB"/>
</dbReference>
<dbReference type="PANTHER" id="PTHR36842:SF1">
    <property type="entry name" value="PROTEIN TOLB"/>
    <property type="match status" value="1"/>
</dbReference>
<dbReference type="PANTHER" id="PTHR36842">
    <property type="entry name" value="PROTEIN TOLB HOMOLOG"/>
    <property type="match status" value="1"/>
</dbReference>
<dbReference type="Pfam" id="PF07676">
    <property type="entry name" value="PD40"/>
    <property type="match status" value="4"/>
</dbReference>
<dbReference type="SUPFAM" id="SSF52964">
    <property type="entry name" value="TolB, N-terminal domain"/>
    <property type="match status" value="1"/>
</dbReference>
<dbReference type="SUPFAM" id="SSF69304">
    <property type="entry name" value="Tricorn protease N-terminal domain"/>
    <property type="match status" value="1"/>
</dbReference>
<reference key="1">
    <citation type="journal article" date="2008" name="Mol. Biol. Evol.">
        <title>Genome evolution of Wolbachia strain wPip from the Culex pipiens group.</title>
        <authorList>
            <person name="Klasson L."/>
            <person name="Walker T."/>
            <person name="Sebaihia M."/>
            <person name="Sanders M.J."/>
            <person name="Quail M.A."/>
            <person name="Lord A."/>
            <person name="Sanders S."/>
            <person name="Earl J."/>
            <person name="O'Neill S.L."/>
            <person name="Thomson N."/>
            <person name="Sinkins S.P."/>
            <person name="Parkhill J."/>
        </authorList>
    </citation>
    <scope>NUCLEOTIDE SEQUENCE [LARGE SCALE GENOMIC DNA]</scope>
    <source>
        <strain>wPip</strain>
    </source>
</reference>
<proteinExistence type="inferred from homology"/>
<evidence type="ECO:0000255" key="1">
    <source>
        <dbReference type="HAMAP-Rule" id="MF_00671"/>
    </source>
</evidence>